<evidence type="ECO:0000255" key="1"/>
<evidence type="ECO:0000305" key="2"/>
<proteinExistence type="inferred from homology"/>
<protein>
    <recommendedName>
        <fullName>Probable membrane transporter protein HI_0806</fullName>
    </recommendedName>
</protein>
<name>Y806_HAEIN</name>
<gene>
    <name type="ordered locus">HI_0806</name>
</gene>
<feature type="chain" id="PRO_0000077957" description="Probable membrane transporter protein HI_0806">
    <location>
        <begin position="1"/>
        <end position="268"/>
    </location>
</feature>
<feature type="transmembrane region" description="Helical" evidence="1">
    <location>
        <begin position="6"/>
        <end position="26"/>
    </location>
</feature>
<feature type="transmembrane region" description="Helical" evidence="1">
    <location>
        <begin position="46"/>
        <end position="66"/>
    </location>
</feature>
<feature type="transmembrane region" description="Helical" evidence="1">
    <location>
        <begin position="79"/>
        <end position="99"/>
    </location>
</feature>
<feature type="transmembrane region" description="Helical" evidence="1">
    <location>
        <begin position="101"/>
        <end position="121"/>
    </location>
</feature>
<feature type="transmembrane region" description="Helical" evidence="1">
    <location>
        <begin position="147"/>
        <end position="167"/>
    </location>
</feature>
<feature type="transmembrane region" description="Helical" evidence="1">
    <location>
        <begin position="178"/>
        <end position="198"/>
    </location>
</feature>
<feature type="transmembrane region" description="Helical" evidence="1">
    <location>
        <begin position="212"/>
        <end position="232"/>
    </location>
</feature>
<feature type="transmembrane region" description="Helical" evidence="1">
    <location>
        <begin position="248"/>
        <end position="268"/>
    </location>
</feature>
<accession>P44054</accession>
<keyword id="KW-1003">Cell membrane</keyword>
<keyword id="KW-0472">Membrane</keyword>
<keyword id="KW-1185">Reference proteome</keyword>
<keyword id="KW-0812">Transmembrane</keyword>
<keyword id="KW-1133">Transmembrane helix</keyword>
<keyword id="KW-0813">Transport</keyword>
<comment type="subcellular location">
    <subcellularLocation>
        <location evidence="2">Cell membrane</location>
        <topology evidence="2">Multi-pass membrane protein</topology>
    </subcellularLocation>
</comment>
<comment type="similarity">
    <text evidence="2">Belongs to the 4-toluene sulfonate uptake permease (TSUP) (TC 2.A.102) family.</text>
</comment>
<sequence length="268" mass="29137">MAFSTIFILLICGICTNMVSAIFGIGGGVLMVPILRTLFPELPIQVISATSLTIVMCTALINLLFFHKQKIKIDYINMILWSIAMVIGVQIGFELSFYFSTAIISLIFTVSLSALAIKTFLNRSRIQIEVFNMSPIERAKGSISFCGGGLIAGITGIGGGSILAPLVGQLKGVKTQQIAVYTNYMMIIGGIGNLYGYLTRAFLYDASLSGQLGLNFLVVGVVTLGSFEMSFFSMKLRGLMNPVLTRKLLAIILFCIAAYMCILEFVFH</sequence>
<dbReference type="EMBL" id="L42023">
    <property type="protein sequence ID" value="AAC22465.1"/>
    <property type="molecule type" value="Genomic_DNA"/>
</dbReference>
<dbReference type="PIR" id="I64013">
    <property type="entry name" value="I64013"/>
</dbReference>
<dbReference type="RefSeq" id="NP_438966.1">
    <property type="nucleotide sequence ID" value="NC_000907.1"/>
</dbReference>
<dbReference type="SMR" id="P44054"/>
<dbReference type="EnsemblBacteria" id="AAC22465">
    <property type="protein sequence ID" value="AAC22465"/>
    <property type="gene ID" value="HI_0806"/>
</dbReference>
<dbReference type="KEGG" id="hin:HI_0806"/>
<dbReference type="PATRIC" id="fig|71421.8.peg.847"/>
<dbReference type="eggNOG" id="COG0730">
    <property type="taxonomic scope" value="Bacteria"/>
</dbReference>
<dbReference type="HOGENOM" id="CLU_045498_5_4_6"/>
<dbReference type="OrthoDB" id="9780109at2"/>
<dbReference type="PhylomeDB" id="P44054"/>
<dbReference type="BioCyc" id="HINF71421:G1GJ1-847-MONOMER"/>
<dbReference type="Proteomes" id="UP000000579">
    <property type="component" value="Chromosome"/>
</dbReference>
<dbReference type="GO" id="GO:0005886">
    <property type="term" value="C:plasma membrane"/>
    <property type="evidence" value="ECO:0007669"/>
    <property type="project" value="UniProtKB-SubCell"/>
</dbReference>
<dbReference type="InterPro" id="IPR002781">
    <property type="entry name" value="TM_pro_TauE-like"/>
</dbReference>
<dbReference type="PANTHER" id="PTHR43483">
    <property type="entry name" value="MEMBRANE TRANSPORTER PROTEIN HI_0806-RELATED"/>
    <property type="match status" value="1"/>
</dbReference>
<dbReference type="PANTHER" id="PTHR43483:SF3">
    <property type="entry name" value="MEMBRANE TRANSPORTER PROTEIN HI_0806-RELATED"/>
    <property type="match status" value="1"/>
</dbReference>
<dbReference type="Pfam" id="PF01925">
    <property type="entry name" value="TauE"/>
    <property type="match status" value="1"/>
</dbReference>
<reference key="1">
    <citation type="journal article" date="1995" name="Science">
        <title>Whole-genome random sequencing and assembly of Haemophilus influenzae Rd.</title>
        <authorList>
            <person name="Fleischmann R.D."/>
            <person name="Adams M.D."/>
            <person name="White O."/>
            <person name="Clayton R.A."/>
            <person name="Kirkness E.F."/>
            <person name="Kerlavage A.R."/>
            <person name="Bult C.J."/>
            <person name="Tomb J.-F."/>
            <person name="Dougherty B.A."/>
            <person name="Merrick J.M."/>
            <person name="McKenney K."/>
            <person name="Sutton G.G."/>
            <person name="FitzHugh W."/>
            <person name="Fields C.A."/>
            <person name="Gocayne J.D."/>
            <person name="Scott J.D."/>
            <person name="Shirley R."/>
            <person name="Liu L.-I."/>
            <person name="Glodek A."/>
            <person name="Kelley J.M."/>
            <person name="Weidman J.F."/>
            <person name="Phillips C.A."/>
            <person name="Spriggs T."/>
            <person name="Hedblom E."/>
            <person name="Cotton M.D."/>
            <person name="Utterback T.R."/>
            <person name="Hanna M.C."/>
            <person name="Nguyen D.T."/>
            <person name="Saudek D.M."/>
            <person name="Brandon R.C."/>
            <person name="Fine L.D."/>
            <person name="Fritchman J.L."/>
            <person name="Fuhrmann J.L."/>
            <person name="Geoghagen N.S.M."/>
            <person name="Gnehm C.L."/>
            <person name="McDonald L.A."/>
            <person name="Small K.V."/>
            <person name="Fraser C.M."/>
            <person name="Smith H.O."/>
            <person name="Venter J.C."/>
        </authorList>
    </citation>
    <scope>NUCLEOTIDE SEQUENCE [LARGE SCALE GENOMIC DNA]</scope>
    <source>
        <strain>ATCC 51907 / DSM 11121 / KW20 / Rd</strain>
    </source>
</reference>
<organism>
    <name type="scientific">Haemophilus influenzae (strain ATCC 51907 / DSM 11121 / KW20 / Rd)</name>
    <dbReference type="NCBI Taxonomy" id="71421"/>
    <lineage>
        <taxon>Bacteria</taxon>
        <taxon>Pseudomonadati</taxon>
        <taxon>Pseudomonadota</taxon>
        <taxon>Gammaproteobacteria</taxon>
        <taxon>Pasteurellales</taxon>
        <taxon>Pasteurellaceae</taxon>
        <taxon>Haemophilus</taxon>
    </lineage>
</organism>